<sequence>MAQGFAVGFDPLGLGDLSSGSLSSLSSRGHLGSDSGSTATRYLLRKQQRLPNVPPRGIRASSPMGRVILINSPIEANSDESDIIHSVRVEKSPAGRLGFSVRGGSEHGLGIFVSKVEEGSSAERAGLCVGDKITEVNGLSLESTTMGSAVKVLTGSSRLHMMVRRMGRVPGIKFSKEKTTWVDVVNRRLVVEKCSSTPSDTSSEDGIRRIVHLYTTSDDFCLGFNIRGGKEFGLGIYVSKVDHGGLAEENGIKVGDQVLAANGVRFDDISHSQAVEVLKGQTHIMLTIKETGRYPAYKEMVSEYCWLDRLSNGVLQQLSPASESSSSVFSCASSAPYSSDSLPSDRMDICLGPEEPGSRGPGWGRADTAMQTEPDAGGRVETWCSVRPTVILRDTTIRSDGPQPGRCLDSAISESPKTALLLALSRPRPPITRSQSYLTLWEEKKQRKKEKSGSTGEKGALQRSKTLMNLFFKGGRQGRLARDGRREAWTPDSGSLAKTCPRLDMEKAGGMGPVQKFVTWRLRRDRERGRALLSARSGSPSSQLPNVDEQVQAWESRRPLIQDLAQRLLTDDEVLAVTRHCSRYVHEGGIEDLVRPLLAILDRPEKLLLLRDIRSVVAPTDLGRFDSMVMPVELEAFEALKSRAVRPPALRPARQDTPPKRHLITPVPDSRGGFYLLPVNGFPEEEDDEELRERLGALKVSPSASAPRHPHKGIPPLQDVPVDAFTPLRSACTPPPQLPHVARRPPRPNWLLTEPLSREHPPQSQIRGRAQSRSRSRSRSRSRSRSSRGQGKSPGRRSPSPVPIPAPSMANGRYHKPQKARPPLPRPLDGEAAKMGAKQGSSENGTGGTAEEAAMKTPSGELKTVTLSKMKQSLGISISGGIESKVQPMVKIEKIFPGGAAFLSGALQAGFELVAVDGESLEQVTHQRAVDTIRRAYRNKAREPMELVVRVPGPSPRPSPSDSSALTDGGLPAAHQPLDAAPVPAHWLPEPPTNPQTPPTDARLL</sequence>
<gene>
    <name type="primary">PDZD7</name>
    <name type="synonym">PDZK7</name>
</gene>
<keyword id="KW-0025">Alternative splicing</keyword>
<keyword id="KW-0966">Cell projection</keyword>
<keyword id="KW-0969">Cilium</keyword>
<keyword id="KW-0539">Nucleus</keyword>
<keyword id="KW-1185">Reference proteome</keyword>
<keyword id="KW-0677">Repeat</keyword>
<comment type="function">
    <text evidence="1">In cochlear developing hair cells, essential in organizing the USH2 complex at stereocilia ankle links. Blocks inhibition of adenylate cyclase activity mediated by ADGRV1.</text>
</comment>
<comment type="subunit">
    <text evidence="1 2">Homodimerizes (via PDZ2 domain). Component of USH2 complex, composed of ADGRV1, PDZD7, USH2A and WHRN. Interacts (via PDZ domains) with WHRN; the interaction is direct (By similarity). Interacts with USH1G. Interacts with ADGRV1 (via the cytoplasmic region). Interacts with USH2A (via the cytoplasmic region) (By similarity). Interacts with MYO7A (via MyTH4-FERM domains) (By similarity).</text>
</comment>
<comment type="subcellular location">
    <subcellularLocation>
        <location evidence="2">Cell projection</location>
        <location evidence="2">Cilium</location>
    </subcellularLocation>
    <subcellularLocation>
        <location evidence="2">Nucleus</location>
    </subcellularLocation>
    <subcellularLocation>
        <location evidence="1">Cell projection</location>
        <location evidence="1">Stereocilium</location>
    </subcellularLocation>
    <text evidence="1">Localizes at the ankle region of the stereocilia.</text>
</comment>
<comment type="alternative products">
    <event type="alternative splicing"/>
    <isoform>
        <id>Q5RBI7-2</id>
        <name>1</name>
        <sequence type="displayed"/>
    </isoform>
    <isoform>
        <id>Q5RBI7-1</id>
        <name>2</name>
        <sequence type="described" ref="VSP_059944"/>
    </isoform>
</comment>
<protein>
    <recommendedName>
        <fullName>PDZ domain-containing protein 7</fullName>
    </recommendedName>
</protein>
<feature type="chain" id="PRO_0000058298" description="PDZ domain-containing protein 7">
    <location>
        <begin position="1"/>
        <end position="1005"/>
    </location>
</feature>
<feature type="domain" description="PDZ 1" evidence="3">
    <location>
        <begin position="86"/>
        <end position="168"/>
    </location>
</feature>
<feature type="domain" description="PDZ 2" evidence="3">
    <location>
        <begin position="210"/>
        <end position="293"/>
    </location>
</feature>
<feature type="region of interest" description="Disordered" evidence="4">
    <location>
        <begin position="353"/>
        <end position="378"/>
    </location>
</feature>
<feature type="region of interest" description="Disordered" evidence="4">
    <location>
        <begin position="700"/>
        <end position="859"/>
    </location>
</feature>
<feature type="region of interest" description="Disordered" evidence="4">
    <location>
        <begin position="949"/>
        <end position="1005"/>
    </location>
</feature>
<feature type="compositionally biased region" description="Basic residues" evidence="4">
    <location>
        <begin position="770"/>
        <end position="786"/>
    </location>
</feature>
<feature type="compositionally biased region" description="Low complexity" evidence="4">
    <location>
        <begin position="787"/>
        <end position="799"/>
    </location>
</feature>
<feature type="compositionally biased region" description="Pro residues" evidence="4">
    <location>
        <begin position="989"/>
        <end position="998"/>
    </location>
</feature>
<feature type="splice variant" id="VSP_059944" description="In isoform 2.">
    <original>EEKKQRKKEKSGSTGEKGALQRSKTLMNLFFKGGRQGRLARDGRREAWTPDSGSLAKTCPRLDMEKAGGMGPVQKFVTWRLRRDRERGRALLSARSGSPSSQLPNVDEQVQAWESRRPLIQDLAQRLLTDDEVLAVTRHCSRYVHEGGIEDLVRPLLAILDRPEKLLLLRDIRSVVAPTDLGRFDSMVMPVELEAFEALKSRAVRPPALRPARQDTPPKRHLITPVPDSRGGFYLLPVNGFPEEEDDEELRERLGALKVSPSASAPRHPHKGIPPLQDVPVDAFTPLRSACTPPPQLPHVARRPPRPNWLLTEPLSREHPPQSQIRGRAQSRSRSRSRSRSRSRSSRGQGKSPGRRSPSPVPIPAPSMANGRYHKPQKARPPLPRPLDGEAAKMGAKQGSSENGTGGTAEEAAMKTPSGELKTVTLSKMKQSLGISISGGIESKVQPMVKIEKIFPGGAAFLSGALQAGFELVAVDGESLEQVTHQRAVDTIRRAYRNKAREPMELVVRVPGPSPRPSPSDSSALTDGGLPAAHQPLDAAPVPAHWLPEPPTNPQTPPTDARLL</original>
    <variation>APPVAPSVCRGEEAAEEGEVGVHWGEGCPAALQDADEPLLQGREAGEASTGRAQRGLDTGQREPGQNLPSPGHGERWSFALVVQAGV</variation>
    <location>
        <begin position="442"/>
        <end position="1005"/>
    </location>
</feature>
<feature type="sequence conflict" description="In Ref. 2; CAH90873." evidence="5" ref="2">
    <original>D</original>
    <variation>H</variation>
    <location>
        <position position="16"/>
    </location>
</feature>
<feature type="sequence conflict" description="In Ref. 2; CAH90873." evidence="5" ref="2">
    <original>R</original>
    <variation>Q</variation>
    <location>
        <position position="187"/>
    </location>
</feature>
<feature type="sequence conflict" description="In Ref. 2; CAH90873." evidence="5" ref="2">
    <original>I</original>
    <variation>V</variation>
    <location>
        <position position="207"/>
    </location>
</feature>
<feature type="sequence conflict" description="In Ref. 2; CAH90873." evidence="5" ref="2">
    <original>R</original>
    <variation>Q</variation>
    <location>
        <position position="379"/>
    </location>
</feature>
<feature type="sequence conflict" description="In Ref. 2; CAH90873." evidence="5" ref="2">
    <original>R</original>
    <variation>K</variation>
    <location>
        <position position="393"/>
    </location>
</feature>
<feature type="sequence conflict" description="In Ref. 2; CAH90873." evidence="5" ref="2">
    <original>C</original>
    <variation>R</variation>
    <location>
        <position position="407"/>
    </location>
</feature>
<evidence type="ECO:0000250" key="1">
    <source>
        <dbReference type="UniProtKB" id="E9Q9W7"/>
    </source>
</evidence>
<evidence type="ECO:0000250" key="2">
    <source>
        <dbReference type="UniProtKB" id="Q9H5P4"/>
    </source>
</evidence>
<evidence type="ECO:0000255" key="3">
    <source>
        <dbReference type="PROSITE-ProRule" id="PRU00143"/>
    </source>
</evidence>
<evidence type="ECO:0000256" key="4">
    <source>
        <dbReference type="SAM" id="MobiDB-lite"/>
    </source>
</evidence>
<evidence type="ECO:0000305" key="5"/>
<accession>Q5RBI7</accession>
<accession>A0A2J8XYB2</accession>
<dbReference type="EMBL" id="NDHI03003286">
    <property type="protein sequence ID" value="PNJ87003.1"/>
    <property type="molecule type" value="Genomic_DNA"/>
</dbReference>
<dbReference type="EMBL" id="CR858660">
    <property type="protein sequence ID" value="CAH90873.1"/>
    <property type="molecule type" value="mRNA"/>
</dbReference>
<dbReference type="RefSeq" id="NP_001125499.1">
    <property type="nucleotide sequence ID" value="NM_001132027.1"/>
</dbReference>
<dbReference type="SMR" id="Q5RBI7"/>
<dbReference type="FunCoup" id="Q5RBI7">
    <property type="interactions" value="23"/>
</dbReference>
<dbReference type="STRING" id="9601.ENSPPYP00000002994"/>
<dbReference type="InParanoid" id="Q5RBI7"/>
<dbReference type="Proteomes" id="UP000001595">
    <property type="component" value="Unplaced"/>
</dbReference>
<dbReference type="GO" id="GO:0005929">
    <property type="term" value="C:cilium"/>
    <property type="evidence" value="ECO:0007669"/>
    <property type="project" value="UniProtKB-SubCell"/>
</dbReference>
<dbReference type="GO" id="GO:0005634">
    <property type="term" value="C:nucleus"/>
    <property type="evidence" value="ECO:0007669"/>
    <property type="project" value="UniProtKB-SubCell"/>
</dbReference>
<dbReference type="GO" id="GO:0005886">
    <property type="term" value="C:plasma membrane"/>
    <property type="evidence" value="ECO:0007669"/>
    <property type="project" value="TreeGrafter"/>
</dbReference>
<dbReference type="GO" id="GO:0002141">
    <property type="term" value="C:stereocilia ankle link"/>
    <property type="evidence" value="ECO:0000250"/>
    <property type="project" value="UniProtKB"/>
</dbReference>
<dbReference type="GO" id="GO:0002142">
    <property type="term" value="C:stereocilia ankle link complex"/>
    <property type="evidence" value="ECO:0000250"/>
    <property type="project" value="UniProtKB"/>
</dbReference>
<dbReference type="GO" id="GO:0032420">
    <property type="term" value="C:stereocilium"/>
    <property type="evidence" value="ECO:0000250"/>
    <property type="project" value="UniProtKB"/>
</dbReference>
<dbReference type="GO" id="GO:0032426">
    <property type="term" value="C:stereocilium tip"/>
    <property type="evidence" value="ECO:0007669"/>
    <property type="project" value="TreeGrafter"/>
</dbReference>
<dbReference type="GO" id="GO:0060117">
    <property type="term" value="P:auditory receptor cell development"/>
    <property type="evidence" value="ECO:0000250"/>
    <property type="project" value="UniProtKB"/>
</dbReference>
<dbReference type="GO" id="GO:0060088">
    <property type="term" value="P:auditory receptor cell stereocilium organization"/>
    <property type="evidence" value="ECO:0000250"/>
    <property type="project" value="UniProtKB"/>
</dbReference>
<dbReference type="GO" id="GO:0050910">
    <property type="term" value="P:detection of mechanical stimulus involved in sensory perception of sound"/>
    <property type="evidence" value="ECO:0000250"/>
    <property type="project" value="UniProtKB"/>
</dbReference>
<dbReference type="GO" id="GO:0045184">
    <property type="term" value="P:establishment of protein localization"/>
    <property type="evidence" value="ECO:0000250"/>
    <property type="project" value="UniProtKB"/>
</dbReference>
<dbReference type="CDD" id="cd07358">
    <property type="entry name" value="HN_PDZD7_like"/>
    <property type="match status" value="1"/>
</dbReference>
<dbReference type="CDD" id="cd10833">
    <property type="entry name" value="PDZ1_PDZD7-like"/>
    <property type="match status" value="1"/>
</dbReference>
<dbReference type="CDD" id="cd10834">
    <property type="entry name" value="PDZ2_PDZD7-like"/>
    <property type="match status" value="1"/>
</dbReference>
<dbReference type="CDD" id="cd06751">
    <property type="entry name" value="PDZ3_PDZD7-like"/>
    <property type="match status" value="1"/>
</dbReference>
<dbReference type="FunFam" id="1.20.1160.20:FF:000007">
    <property type="entry name" value="PDZ domain containing 7"/>
    <property type="match status" value="1"/>
</dbReference>
<dbReference type="FunFam" id="2.30.42.10:FF:000090">
    <property type="entry name" value="PDZ domain containing 7"/>
    <property type="match status" value="1"/>
</dbReference>
<dbReference type="FunFam" id="2.30.42.10:FF:000092">
    <property type="entry name" value="PDZ domain containing 7"/>
    <property type="match status" value="1"/>
</dbReference>
<dbReference type="FunFam" id="2.30.42.10:FF:000171">
    <property type="entry name" value="PDZ domain containing 7"/>
    <property type="match status" value="1"/>
</dbReference>
<dbReference type="Gene3D" id="1.20.1160.20">
    <property type="match status" value="1"/>
</dbReference>
<dbReference type="Gene3D" id="2.30.42.10">
    <property type="match status" value="3"/>
</dbReference>
<dbReference type="InterPro" id="IPR001478">
    <property type="entry name" value="PDZ"/>
</dbReference>
<dbReference type="InterPro" id="IPR036034">
    <property type="entry name" value="PDZ_sf"/>
</dbReference>
<dbReference type="InterPro" id="IPR042786">
    <property type="entry name" value="PDZD7_HN-like"/>
</dbReference>
<dbReference type="InterPro" id="IPR051844">
    <property type="entry name" value="USH2_Complex_Protein"/>
</dbReference>
<dbReference type="PANTHER" id="PTHR23116">
    <property type="entry name" value="PDZ DOMAIN CONTAINING WHIRLIN AND HARMONIN-RELATED"/>
    <property type="match status" value="1"/>
</dbReference>
<dbReference type="PANTHER" id="PTHR23116:SF29">
    <property type="entry name" value="PDZ DOMAIN-CONTAINING PROTEIN 7"/>
    <property type="match status" value="1"/>
</dbReference>
<dbReference type="Pfam" id="PF00595">
    <property type="entry name" value="PDZ"/>
    <property type="match status" value="3"/>
</dbReference>
<dbReference type="SMART" id="SM00228">
    <property type="entry name" value="PDZ"/>
    <property type="match status" value="3"/>
</dbReference>
<dbReference type="SUPFAM" id="SSF50156">
    <property type="entry name" value="PDZ domain-like"/>
    <property type="match status" value="3"/>
</dbReference>
<dbReference type="PROSITE" id="PS50106">
    <property type="entry name" value="PDZ"/>
    <property type="match status" value="3"/>
</dbReference>
<proteinExistence type="evidence at transcript level"/>
<name>PDZD7_PONAB</name>
<reference key="1">
    <citation type="submission" date="2017-12" db="EMBL/GenBank/DDBJ databases">
        <title>High-resolution comparative analysis of great ape genomes.</title>
        <authorList>
            <person name="Pollen A."/>
            <person name="Hastie A."/>
            <person name="Hormozdiari F."/>
            <person name="Dougherty M."/>
            <person name="Liu R."/>
            <person name="Chaisson M."/>
            <person name="Hoppe E."/>
            <person name="Hill C."/>
            <person name="Pang A."/>
            <person name="Hillier L."/>
            <person name="Baker C."/>
            <person name="Armstrong J."/>
            <person name="Shendure J."/>
            <person name="Paten B."/>
            <person name="Wilson R."/>
            <person name="Chao H."/>
            <person name="Schneider V."/>
            <person name="Ventura M."/>
            <person name="Kronenberg Z."/>
            <person name="Murali S."/>
            <person name="Gordon D."/>
            <person name="Cantsilieris S."/>
            <person name="Munson K."/>
            <person name="Nelson B."/>
            <person name="Raja A."/>
            <person name="Underwood J."/>
            <person name="Diekhans M."/>
            <person name="Fiddes I."/>
            <person name="Haussler D."/>
            <person name="Eichler E."/>
        </authorList>
    </citation>
    <scope>NUCLEOTIDE SEQUENCE [LARGE SCALE GENOMIC DNA]</scope>
</reference>
<reference key="2">
    <citation type="submission" date="2004-11" db="EMBL/GenBank/DDBJ databases">
        <authorList>
            <consortium name="The German cDNA consortium"/>
        </authorList>
    </citation>
    <scope>NUCLEOTIDE SEQUENCE [LARGE SCALE MRNA] (ISOFORM 2)</scope>
    <source>
        <tissue>Brain cortex</tissue>
    </source>
</reference>
<organism>
    <name type="scientific">Pongo abelii</name>
    <name type="common">Sumatran orangutan</name>
    <name type="synonym">Pongo pygmaeus abelii</name>
    <dbReference type="NCBI Taxonomy" id="9601"/>
    <lineage>
        <taxon>Eukaryota</taxon>
        <taxon>Metazoa</taxon>
        <taxon>Chordata</taxon>
        <taxon>Craniata</taxon>
        <taxon>Vertebrata</taxon>
        <taxon>Euteleostomi</taxon>
        <taxon>Mammalia</taxon>
        <taxon>Eutheria</taxon>
        <taxon>Euarchontoglires</taxon>
        <taxon>Primates</taxon>
        <taxon>Haplorrhini</taxon>
        <taxon>Catarrhini</taxon>
        <taxon>Hominidae</taxon>
        <taxon>Pongo</taxon>
    </lineage>
</organism>